<protein>
    <recommendedName>
        <fullName evidence="1">RNA 3'-terminal phosphate cyclase</fullName>
        <shortName evidence="1">RNA cyclase</shortName>
        <shortName evidence="1">RNA-3'-phosphate cyclase</shortName>
        <ecNumber evidence="1">6.5.1.4</ecNumber>
    </recommendedName>
</protein>
<sequence length="344" mass="36010">MARIIALDGAQGEGGGQILRSALSLSMITGQPFEMSGIRAGRAKPGLLRQHLTAVRAATEICGAQVNGDELGSQQLRFTPGPIRGGEYRFAIGSAGSCMLVLQTVLPALWFADGSSRVEVHGGTHNQAAPSADFICRVWEPLLARMGISQRTTLIKHGFYPAGGGAAATVVEPATSLRGLTLISRGETLRTTAEALLAAVPYHVGEREVATLEAHFPQAEKNVVALEGGCGPGNALSLMIQSEQLTELFVAFGVKGTSAEAVANQVAHEARRYLASPAAVGEHLADQLILPLALAGEGAFTVARASAHLLTNIAVVERFLPVTFNLEEARGMVQVMVSKKDSGS</sequence>
<keyword id="KW-0067">ATP-binding</keyword>
<keyword id="KW-0963">Cytoplasm</keyword>
<keyword id="KW-0436">Ligase</keyword>
<keyword id="KW-0547">Nucleotide-binding</keyword>
<proteinExistence type="inferred from homology"/>
<name>RTCA_SALPC</name>
<comment type="function">
    <text evidence="1">Catalyzes the conversion of 3'-phosphate to a 2',3'-cyclic phosphodiester at the end of RNA. The mechanism of action of the enzyme occurs in 3 steps: (A) adenylation of the enzyme by ATP; (B) transfer of adenylate to an RNA-N3'P to produce RNA-N3'PP5'A; (C) and attack of the adjacent 2'-hydroxyl on the 3'-phosphorus in the diester linkage to produce the cyclic end product. The biological role of this enzyme is unknown but it is likely to function in some aspects of cellular RNA processing.</text>
</comment>
<comment type="catalytic activity">
    <reaction evidence="1">
        <text>a 3'-end 3'-phospho-ribonucleotide-RNA + ATP = a 3'-end 2',3'-cyclophospho-ribonucleotide-RNA + AMP + diphosphate</text>
        <dbReference type="Rhea" id="RHEA:23976"/>
        <dbReference type="Rhea" id="RHEA-COMP:10463"/>
        <dbReference type="Rhea" id="RHEA-COMP:10464"/>
        <dbReference type="ChEBI" id="CHEBI:30616"/>
        <dbReference type="ChEBI" id="CHEBI:33019"/>
        <dbReference type="ChEBI" id="CHEBI:83062"/>
        <dbReference type="ChEBI" id="CHEBI:83064"/>
        <dbReference type="ChEBI" id="CHEBI:456215"/>
        <dbReference type="EC" id="6.5.1.4"/>
    </reaction>
</comment>
<comment type="subcellular location">
    <subcellularLocation>
        <location evidence="1">Cytoplasm</location>
    </subcellularLocation>
</comment>
<comment type="similarity">
    <text evidence="1">Belongs to the RNA 3'-terminal cyclase family. Type 1 subfamily.</text>
</comment>
<dbReference type="EC" id="6.5.1.4" evidence="1"/>
<dbReference type="EMBL" id="CP000857">
    <property type="protein sequence ID" value="ACN47670.1"/>
    <property type="molecule type" value="Genomic_DNA"/>
</dbReference>
<dbReference type="RefSeq" id="WP_000101034.1">
    <property type="nucleotide sequence ID" value="NC_012125.1"/>
</dbReference>
<dbReference type="SMR" id="C0Q0J3"/>
<dbReference type="KEGG" id="sei:SPC_3587"/>
<dbReference type="HOGENOM" id="CLU_027882_0_0_6"/>
<dbReference type="Proteomes" id="UP000001599">
    <property type="component" value="Chromosome"/>
</dbReference>
<dbReference type="GO" id="GO:0005737">
    <property type="term" value="C:cytoplasm"/>
    <property type="evidence" value="ECO:0007669"/>
    <property type="project" value="UniProtKB-SubCell"/>
</dbReference>
<dbReference type="GO" id="GO:0005524">
    <property type="term" value="F:ATP binding"/>
    <property type="evidence" value="ECO:0007669"/>
    <property type="project" value="UniProtKB-KW"/>
</dbReference>
<dbReference type="GO" id="GO:0003963">
    <property type="term" value="F:RNA-3'-phosphate cyclase activity"/>
    <property type="evidence" value="ECO:0007669"/>
    <property type="project" value="UniProtKB-UniRule"/>
</dbReference>
<dbReference type="GO" id="GO:0006396">
    <property type="term" value="P:RNA processing"/>
    <property type="evidence" value="ECO:0007669"/>
    <property type="project" value="InterPro"/>
</dbReference>
<dbReference type="CDD" id="cd00874">
    <property type="entry name" value="RNA_Cyclase_Class_II"/>
    <property type="match status" value="1"/>
</dbReference>
<dbReference type="FunFam" id="3.65.10.20:FF:000002">
    <property type="entry name" value="GM19193"/>
    <property type="match status" value="1"/>
</dbReference>
<dbReference type="FunFam" id="3.30.360.20:FF:000003">
    <property type="entry name" value="RNA 3'-terminal phosphate cyclase"/>
    <property type="match status" value="1"/>
</dbReference>
<dbReference type="Gene3D" id="3.65.10.20">
    <property type="entry name" value="RNA 3'-terminal phosphate cyclase domain"/>
    <property type="match status" value="1"/>
</dbReference>
<dbReference type="Gene3D" id="3.30.360.20">
    <property type="entry name" value="RNA 3'-terminal phosphate cyclase, insert domain"/>
    <property type="match status" value="1"/>
</dbReference>
<dbReference type="HAMAP" id="MF_00200">
    <property type="entry name" value="RTC"/>
    <property type="match status" value="1"/>
</dbReference>
<dbReference type="InterPro" id="IPR013791">
    <property type="entry name" value="RNA3'-term_phos_cycl_insert"/>
</dbReference>
<dbReference type="InterPro" id="IPR023797">
    <property type="entry name" value="RNA3'_phos_cyclase_dom"/>
</dbReference>
<dbReference type="InterPro" id="IPR037136">
    <property type="entry name" value="RNA3'_phos_cyclase_dom_sf"/>
</dbReference>
<dbReference type="InterPro" id="IPR000228">
    <property type="entry name" value="RNA3'_term_phos_cyc"/>
</dbReference>
<dbReference type="InterPro" id="IPR017770">
    <property type="entry name" value="RNA3'_term_phos_cyc_type_1"/>
</dbReference>
<dbReference type="InterPro" id="IPR013792">
    <property type="entry name" value="RNA3'P_cycl/enolpyr_Trfase_a/b"/>
</dbReference>
<dbReference type="InterPro" id="IPR036553">
    <property type="entry name" value="RPTC_insert"/>
</dbReference>
<dbReference type="NCBIfam" id="NF003246">
    <property type="entry name" value="PRK04204.1-2"/>
    <property type="match status" value="1"/>
</dbReference>
<dbReference type="NCBIfam" id="NF003247">
    <property type="entry name" value="PRK04204.1-3"/>
    <property type="match status" value="1"/>
</dbReference>
<dbReference type="NCBIfam" id="TIGR03399">
    <property type="entry name" value="RNA_3prim_cycl"/>
    <property type="match status" value="1"/>
</dbReference>
<dbReference type="PANTHER" id="PTHR11096">
    <property type="entry name" value="RNA 3' TERMINAL PHOSPHATE CYCLASE"/>
    <property type="match status" value="1"/>
</dbReference>
<dbReference type="PANTHER" id="PTHR11096:SF0">
    <property type="entry name" value="RNA 3'-TERMINAL PHOSPHATE CYCLASE"/>
    <property type="match status" value="1"/>
</dbReference>
<dbReference type="Pfam" id="PF01137">
    <property type="entry name" value="RTC"/>
    <property type="match status" value="1"/>
</dbReference>
<dbReference type="Pfam" id="PF05189">
    <property type="entry name" value="RTC_insert"/>
    <property type="match status" value="1"/>
</dbReference>
<dbReference type="PIRSF" id="PIRSF005378">
    <property type="entry name" value="RNA3'_term_phos_cycl_euk"/>
    <property type="match status" value="1"/>
</dbReference>
<dbReference type="SUPFAM" id="SSF55205">
    <property type="entry name" value="EPT/RTPC-like"/>
    <property type="match status" value="2"/>
</dbReference>
<dbReference type="SUPFAM" id="SSF52913">
    <property type="entry name" value="RNA 3'-terminal phosphate cyclase, RPTC, insert domain"/>
    <property type="match status" value="1"/>
</dbReference>
<accession>C0Q0J3</accession>
<gene>
    <name evidence="1" type="primary">rtcA</name>
    <name type="ordered locus">SPC_3587</name>
</gene>
<evidence type="ECO:0000255" key="1">
    <source>
        <dbReference type="HAMAP-Rule" id="MF_00200"/>
    </source>
</evidence>
<feature type="chain" id="PRO_1000195103" description="RNA 3'-terminal phosphate cyclase">
    <location>
        <begin position="1"/>
        <end position="344"/>
    </location>
</feature>
<feature type="active site" description="Tele-AMP-histidine intermediate" evidence="1">
    <location>
        <position position="308"/>
    </location>
</feature>
<feature type="binding site" evidence="1">
    <location>
        <position position="103"/>
    </location>
    <ligand>
        <name>ATP</name>
        <dbReference type="ChEBI" id="CHEBI:30616"/>
    </ligand>
</feature>
<feature type="binding site" evidence="1">
    <location>
        <begin position="283"/>
        <end position="287"/>
    </location>
    <ligand>
        <name>ATP</name>
        <dbReference type="ChEBI" id="CHEBI:30616"/>
    </ligand>
</feature>
<reference key="1">
    <citation type="journal article" date="2009" name="PLoS ONE">
        <title>Salmonella paratyphi C: genetic divergence from Salmonella choleraesuis and pathogenic convergence with Salmonella typhi.</title>
        <authorList>
            <person name="Liu W.-Q."/>
            <person name="Feng Y."/>
            <person name="Wang Y."/>
            <person name="Zou Q.-H."/>
            <person name="Chen F."/>
            <person name="Guo J.-T."/>
            <person name="Peng Y.-H."/>
            <person name="Jin Y."/>
            <person name="Li Y.-G."/>
            <person name="Hu S.-N."/>
            <person name="Johnston R.N."/>
            <person name="Liu G.-R."/>
            <person name="Liu S.-L."/>
        </authorList>
    </citation>
    <scope>NUCLEOTIDE SEQUENCE [LARGE SCALE GENOMIC DNA]</scope>
    <source>
        <strain>RKS4594</strain>
    </source>
</reference>
<organism>
    <name type="scientific">Salmonella paratyphi C (strain RKS4594)</name>
    <dbReference type="NCBI Taxonomy" id="476213"/>
    <lineage>
        <taxon>Bacteria</taxon>
        <taxon>Pseudomonadati</taxon>
        <taxon>Pseudomonadota</taxon>
        <taxon>Gammaproteobacteria</taxon>
        <taxon>Enterobacterales</taxon>
        <taxon>Enterobacteriaceae</taxon>
        <taxon>Salmonella</taxon>
    </lineage>
</organism>